<comment type="function">
    <text evidence="1">Key enzyme in the regulation of glycerol uptake and metabolism. Catalyzes the phosphorylation of glycerol to yield sn-glycerol 3-phosphate.</text>
</comment>
<comment type="catalytic activity">
    <reaction evidence="1">
        <text>glycerol + ATP = sn-glycerol 3-phosphate + ADP + H(+)</text>
        <dbReference type="Rhea" id="RHEA:21644"/>
        <dbReference type="ChEBI" id="CHEBI:15378"/>
        <dbReference type="ChEBI" id="CHEBI:17754"/>
        <dbReference type="ChEBI" id="CHEBI:30616"/>
        <dbReference type="ChEBI" id="CHEBI:57597"/>
        <dbReference type="ChEBI" id="CHEBI:456216"/>
        <dbReference type="EC" id="2.7.1.30"/>
    </reaction>
</comment>
<comment type="activity regulation">
    <text evidence="1">Activated by phosphorylation and inhibited by fructose 1,6-bisphosphate (FBP).</text>
</comment>
<comment type="pathway">
    <text evidence="1">Polyol metabolism; glycerol degradation via glycerol kinase pathway; sn-glycerol 3-phosphate from glycerol: step 1/1.</text>
</comment>
<comment type="subunit">
    <text evidence="1">Homotetramer and homodimer (in equilibrium).</text>
</comment>
<comment type="PTM">
    <text evidence="1">The phosphoenolpyruvate-dependent sugar phosphotransferase system (PTS), including enzyme I, and histidine-containing protein (HPr) are required for the phosphorylation, which leads to the activation of the enzyme.</text>
</comment>
<comment type="similarity">
    <text evidence="1">Belongs to the FGGY kinase family.</text>
</comment>
<sequence length="500" mass="55158">MSEEKYIMAIDQGTTSSRAIIFNKKGEKIASSQKEFPQIFPQAGWVEHNANQIWNSVQSVIAGAFIESSIKPGQIEAIGITNQRETTVIWDKKTGLPIYNAIVWQSRQTAPIADQLKEDGYTDLIHEKTGLVIDAYFSATKIRWILDHVPGAQERAEKGELLFGTIDTWLVWKLTDGAAHVTDYSNAARTMLYNIKELKWDEEILKLLNIPKAILPEVKSNSEVYGKTAAFHFYGGEVPISGMAGDQQAALFGQLAFEPGMVKNTYGTGSFIIMNTGEDMQLSENNLLTTIGYGINGKVYYALEGSIFIAGSAIQWLRDGLRMIETSPESEALALASTSDDEIYVVPAFTGLGAPYWNSNARGSVFGLTRGTTKEDFVKATLQSIAYQVRDVIDTMQIDSGIDIQQLRVDGGAAMNNLLMQFQADILGIDIARAKNLETTALGAAFLAGLAVGYWEDLDSLKELNETGQLFKASMNESRKEKLYKGWKKAVMATQIFAEE</sequence>
<feature type="chain" id="PRO_1000124207" description="Glycerol kinase">
    <location>
        <begin position="1"/>
        <end position="500"/>
    </location>
</feature>
<feature type="binding site" evidence="1">
    <location>
        <position position="14"/>
    </location>
    <ligand>
        <name>ADP</name>
        <dbReference type="ChEBI" id="CHEBI:456216"/>
    </ligand>
</feature>
<feature type="binding site" evidence="1">
    <location>
        <position position="14"/>
    </location>
    <ligand>
        <name>ATP</name>
        <dbReference type="ChEBI" id="CHEBI:30616"/>
    </ligand>
</feature>
<feature type="binding site" evidence="1">
    <location>
        <position position="14"/>
    </location>
    <ligand>
        <name>sn-glycerol 3-phosphate</name>
        <dbReference type="ChEBI" id="CHEBI:57597"/>
    </ligand>
</feature>
<feature type="binding site" evidence="1">
    <location>
        <position position="15"/>
    </location>
    <ligand>
        <name>ATP</name>
        <dbReference type="ChEBI" id="CHEBI:30616"/>
    </ligand>
</feature>
<feature type="binding site" evidence="1">
    <location>
        <position position="16"/>
    </location>
    <ligand>
        <name>ATP</name>
        <dbReference type="ChEBI" id="CHEBI:30616"/>
    </ligand>
</feature>
<feature type="binding site" evidence="1">
    <location>
        <position position="18"/>
    </location>
    <ligand>
        <name>ADP</name>
        <dbReference type="ChEBI" id="CHEBI:456216"/>
    </ligand>
</feature>
<feature type="binding site" evidence="1">
    <location>
        <position position="84"/>
    </location>
    <ligand>
        <name>glycerol</name>
        <dbReference type="ChEBI" id="CHEBI:17754"/>
    </ligand>
</feature>
<feature type="binding site" evidence="1">
    <location>
        <position position="84"/>
    </location>
    <ligand>
        <name>sn-glycerol 3-phosphate</name>
        <dbReference type="ChEBI" id="CHEBI:57597"/>
    </ligand>
</feature>
<feature type="binding site" evidence="1">
    <location>
        <position position="85"/>
    </location>
    <ligand>
        <name>glycerol</name>
        <dbReference type="ChEBI" id="CHEBI:17754"/>
    </ligand>
</feature>
<feature type="binding site" evidence="1">
    <location>
        <position position="85"/>
    </location>
    <ligand>
        <name>sn-glycerol 3-phosphate</name>
        <dbReference type="ChEBI" id="CHEBI:57597"/>
    </ligand>
</feature>
<feature type="binding site" evidence="1">
    <location>
        <position position="136"/>
    </location>
    <ligand>
        <name>glycerol</name>
        <dbReference type="ChEBI" id="CHEBI:17754"/>
    </ligand>
</feature>
<feature type="binding site" evidence="1">
    <location>
        <position position="136"/>
    </location>
    <ligand>
        <name>sn-glycerol 3-phosphate</name>
        <dbReference type="ChEBI" id="CHEBI:57597"/>
    </ligand>
</feature>
<feature type="binding site" evidence="1">
    <location>
        <position position="246"/>
    </location>
    <ligand>
        <name>glycerol</name>
        <dbReference type="ChEBI" id="CHEBI:17754"/>
    </ligand>
</feature>
<feature type="binding site" evidence="1">
    <location>
        <position position="246"/>
    </location>
    <ligand>
        <name>sn-glycerol 3-phosphate</name>
        <dbReference type="ChEBI" id="CHEBI:57597"/>
    </ligand>
</feature>
<feature type="binding site" evidence="1">
    <location>
        <position position="247"/>
    </location>
    <ligand>
        <name>glycerol</name>
        <dbReference type="ChEBI" id="CHEBI:17754"/>
    </ligand>
</feature>
<feature type="binding site" evidence="1">
    <location>
        <position position="268"/>
    </location>
    <ligand>
        <name>ADP</name>
        <dbReference type="ChEBI" id="CHEBI:456216"/>
    </ligand>
</feature>
<feature type="binding site" evidence="1">
    <location>
        <position position="268"/>
    </location>
    <ligand>
        <name>ATP</name>
        <dbReference type="ChEBI" id="CHEBI:30616"/>
    </ligand>
</feature>
<feature type="binding site" evidence="1">
    <location>
        <position position="311"/>
    </location>
    <ligand>
        <name>ADP</name>
        <dbReference type="ChEBI" id="CHEBI:456216"/>
    </ligand>
</feature>
<feature type="binding site" evidence="1">
    <location>
        <position position="311"/>
    </location>
    <ligand>
        <name>ATP</name>
        <dbReference type="ChEBI" id="CHEBI:30616"/>
    </ligand>
</feature>
<feature type="binding site" evidence="1">
    <location>
        <position position="315"/>
    </location>
    <ligand>
        <name>ATP</name>
        <dbReference type="ChEBI" id="CHEBI:30616"/>
    </ligand>
</feature>
<feature type="binding site" evidence="1">
    <location>
        <position position="412"/>
    </location>
    <ligand>
        <name>ADP</name>
        <dbReference type="ChEBI" id="CHEBI:456216"/>
    </ligand>
</feature>
<feature type="binding site" evidence="1">
    <location>
        <position position="412"/>
    </location>
    <ligand>
        <name>ATP</name>
        <dbReference type="ChEBI" id="CHEBI:30616"/>
    </ligand>
</feature>
<feature type="binding site" evidence="1">
    <location>
        <position position="416"/>
    </location>
    <ligand>
        <name>ADP</name>
        <dbReference type="ChEBI" id="CHEBI:456216"/>
    </ligand>
</feature>
<feature type="modified residue" description="Phosphohistidine; by HPr" evidence="1">
    <location>
        <position position="232"/>
    </location>
</feature>
<proteinExistence type="inferred from homology"/>
<organism>
    <name type="scientific">Streptococcus uberis (strain ATCC BAA-854 / 0140J)</name>
    <dbReference type="NCBI Taxonomy" id="218495"/>
    <lineage>
        <taxon>Bacteria</taxon>
        <taxon>Bacillati</taxon>
        <taxon>Bacillota</taxon>
        <taxon>Bacilli</taxon>
        <taxon>Lactobacillales</taxon>
        <taxon>Streptococcaceae</taxon>
        <taxon>Streptococcus</taxon>
    </lineage>
</organism>
<name>GLPK_STRU0</name>
<gene>
    <name evidence="1" type="primary">glpK</name>
    <name type="ordered locus">SUB1433</name>
</gene>
<accession>B9DV90</accession>
<protein>
    <recommendedName>
        <fullName evidence="1">Glycerol kinase</fullName>
        <ecNumber evidence="1">2.7.1.30</ecNumber>
    </recommendedName>
    <alternativeName>
        <fullName evidence="1">ATP:glycerol 3-phosphotransferase</fullName>
    </alternativeName>
    <alternativeName>
        <fullName evidence="1">Glycerokinase</fullName>
        <shortName evidence="1">GK</shortName>
    </alternativeName>
</protein>
<reference key="1">
    <citation type="journal article" date="2009" name="BMC Genomics">
        <title>Evidence for niche adaptation in the genome of the bovine pathogen Streptococcus uberis.</title>
        <authorList>
            <person name="Ward P.N."/>
            <person name="Holden M.T.G."/>
            <person name="Leigh J.A."/>
            <person name="Lennard N."/>
            <person name="Bignell A."/>
            <person name="Barron A."/>
            <person name="Clark L."/>
            <person name="Quail M.A."/>
            <person name="Woodward J."/>
            <person name="Barrell B.G."/>
            <person name="Egan S.A."/>
            <person name="Field T.R."/>
            <person name="Maskell D."/>
            <person name="Kehoe M."/>
            <person name="Dowson C.G."/>
            <person name="Chanter N."/>
            <person name="Whatmore A.M."/>
            <person name="Bentley S.D."/>
            <person name="Parkhill J."/>
        </authorList>
    </citation>
    <scope>NUCLEOTIDE SEQUENCE [LARGE SCALE GENOMIC DNA]</scope>
    <source>
        <strain>ATCC BAA-854 / 0140J</strain>
    </source>
</reference>
<keyword id="KW-0067">ATP-binding</keyword>
<keyword id="KW-0319">Glycerol metabolism</keyword>
<keyword id="KW-0418">Kinase</keyword>
<keyword id="KW-0547">Nucleotide-binding</keyword>
<keyword id="KW-0597">Phosphoprotein</keyword>
<keyword id="KW-1185">Reference proteome</keyword>
<keyword id="KW-0808">Transferase</keyword>
<dbReference type="EC" id="2.7.1.30" evidence="1"/>
<dbReference type="EMBL" id="AM946015">
    <property type="protein sequence ID" value="CAR43103.1"/>
    <property type="molecule type" value="Genomic_DNA"/>
</dbReference>
<dbReference type="RefSeq" id="WP_015911752.1">
    <property type="nucleotide sequence ID" value="NC_012004.1"/>
</dbReference>
<dbReference type="SMR" id="B9DV90"/>
<dbReference type="STRING" id="218495.SUB1433"/>
<dbReference type="GeneID" id="93826756"/>
<dbReference type="KEGG" id="sub:SUB1433"/>
<dbReference type="eggNOG" id="COG0554">
    <property type="taxonomic scope" value="Bacteria"/>
</dbReference>
<dbReference type="HOGENOM" id="CLU_009281_2_3_9"/>
<dbReference type="OrthoDB" id="9805576at2"/>
<dbReference type="UniPathway" id="UPA00618">
    <property type="reaction ID" value="UER00672"/>
</dbReference>
<dbReference type="Proteomes" id="UP000000449">
    <property type="component" value="Chromosome"/>
</dbReference>
<dbReference type="GO" id="GO:0005829">
    <property type="term" value="C:cytosol"/>
    <property type="evidence" value="ECO:0007669"/>
    <property type="project" value="TreeGrafter"/>
</dbReference>
<dbReference type="GO" id="GO:0005524">
    <property type="term" value="F:ATP binding"/>
    <property type="evidence" value="ECO:0007669"/>
    <property type="project" value="UniProtKB-UniRule"/>
</dbReference>
<dbReference type="GO" id="GO:0004370">
    <property type="term" value="F:glycerol kinase activity"/>
    <property type="evidence" value="ECO:0000250"/>
    <property type="project" value="UniProtKB"/>
</dbReference>
<dbReference type="GO" id="GO:0019563">
    <property type="term" value="P:glycerol catabolic process"/>
    <property type="evidence" value="ECO:0007669"/>
    <property type="project" value="UniProtKB-UniRule"/>
</dbReference>
<dbReference type="GO" id="GO:0006071">
    <property type="term" value="P:glycerol metabolic process"/>
    <property type="evidence" value="ECO:0000250"/>
    <property type="project" value="UniProtKB"/>
</dbReference>
<dbReference type="GO" id="GO:0006072">
    <property type="term" value="P:glycerol-3-phosphate metabolic process"/>
    <property type="evidence" value="ECO:0007669"/>
    <property type="project" value="InterPro"/>
</dbReference>
<dbReference type="CDD" id="cd07786">
    <property type="entry name" value="FGGY_EcGK_like"/>
    <property type="match status" value="1"/>
</dbReference>
<dbReference type="FunFam" id="3.30.420.40:FF:000007">
    <property type="entry name" value="Glycerol kinase"/>
    <property type="match status" value="1"/>
</dbReference>
<dbReference type="FunFam" id="3.30.420.40:FF:000008">
    <property type="entry name" value="Glycerol kinase"/>
    <property type="match status" value="1"/>
</dbReference>
<dbReference type="Gene3D" id="3.30.420.40">
    <property type="match status" value="2"/>
</dbReference>
<dbReference type="HAMAP" id="MF_00186">
    <property type="entry name" value="Glycerol_kin"/>
    <property type="match status" value="1"/>
</dbReference>
<dbReference type="InterPro" id="IPR043129">
    <property type="entry name" value="ATPase_NBD"/>
</dbReference>
<dbReference type="InterPro" id="IPR000577">
    <property type="entry name" value="Carb_kinase_FGGY"/>
</dbReference>
<dbReference type="InterPro" id="IPR018483">
    <property type="entry name" value="Carb_kinase_FGGY_CS"/>
</dbReference>
<dbReference type="InterPro" id="IPR018485">
    <property type="entry name" value="FGGY_C"/>
</dbReference>
<dbReference type="InterPro" id="IPR018484">
    <property type="entry name" value="FGGY_N"/>
</dbReference>
<dbReference type="InterPro" id="IPR005999">
    <property type="entry name" value="Glycerol_kin"/>
</dbReference>
<dbReference type="NCBIfam" id="TIGR01311">
    <property type="entry name" value="glycerol_kin"/>
    <property type="match status" value="1"/>
</dbReference>
<dbReference type="NCBIfam" id="NF000756">
    <property type="entry name" value="PRK00047.1"/>
    <property type="match status" value="1"/>
</dbReference>
<dbReference type="PANTHER" id="PTHR10196:SF69">
    <property type="entry name" value="GLYCEROL KINASE"/>
    <property type="match status" value="1"/>
</dbReference>
<dbReference type="PANTHER" id="PTHR10196">
    <property type="entry name" value="SUGAR KINASE"/>
    <property type="match status" value="1"/>
</dbReference>
<dbReference type="Pfam" id="PF02782">
    <property type="entry name" value="FGGY_C"/>
    <property type="match status" value="1"/>
</dbReference>
<dbReference type="Pfam" id="PF00370">
    <property type="entry name" value="FGGY_N"/>
    <property type="match status" value="1"/>
</dbReference>
<dbReference type="PIRSF" id="PIRSF000538">
    <property type="entry name" value="GlpK"/>
    <property type="match status" value="1"/>
</dbReference>
<dbReference type="SUPFAM" id="SSF53067">
    <property type="entry name" value="Actin-like ATPase domain"/>
    <property type="match status" value="2"/>
</dbReference>
<dbReference type="PROSITE" id="PS00933">
    <property type="entry name" value="FGGY_KINASES_1"/>
    <property type="match status" value="1"/>
</dbReference>
<dbReference type="PROSITE" id="PS00445">
    <property type="entry name" value="FGGY_KINASES_2"/>
    <property type="match status" value="1"/>
</dbReference>
<evidence type="ECO:0000255" key="1">
    <source>
        <dbReference type="HAMAP-Rule" id="MF_00186"/>
    </source>
</evidence>